<accession>A5F745</accession>
<accession>C3M1P4</accession>
<evidence type="ECO:0000255" key="1">
    <source>
        <dbReference type="HAMAP-Rule" id="MF_00612"/>
    </source>
</evidence>
<dbReference type="EMBL" id="CP000627">
    <property type="protein sequence ID" value="ABQ21166.1"/>
    <property type="molecule type" value="Genomic_DNA"/>
</dbReference>
<dbReference type="EMBL" id="CP001235">
    <property type="protein sequence ID" value="ACP09960.1"/>
    <property type="molecule type" value="Genomic_DNA"/>
</dbReference>
<dbReference type="RefSeq" id="WP_001881606.1">
    <property type="nucleotide sequence ID" value="NZ_JAACZH010000001.1"/>
</dbReference>
<dbReference type="SMR" id="A5F745"/>
<dbReference type="KEGG" id="vco:VC0395_A1443"/>
<dbReference type="KEGG" id="vcr:VC395_1967"/>
<dbReference type="PATRIC" id="fig|345073.21.peg.1899"/>
<dbReference type="eggNOG" id="COG3012">
    <property type="taxonomic scope" value="Bacteria"/>
</dbReference>
<dbReference type="HOGENOM" id="CLU_099590_0_0_6"/>
<dbReference type="OrthoDB" id="21421at2"/>
<dbReference type="Proteomes" id="UP000000249">
    <property type="component" value="Chromosome 2"/>
</dbReference>
<dbReference type="Gene3D" id="3.10.450.50">
    <property type="match status" value="1"/>
</dbReference>
<dbReference type="HAMAP" id="MF_00612">
    <property type="entry name" value="UPF0225"/>
    <property type="match status" value="1"/>
</dbReference>
<dbReference type="InterPro" id="IPR032710">
    <property type="entry name" value="NTF2-like_dom_sf"/>
</dbReference>
<dbReference type="InterPro" id="IPR004027">
    <property type="entry name" value="SEC_C_motif"/>
</dbReference>
<dbReference type="InterPro" id="IPR023006">
    <property type="entry name" value="UPF0225"/>
</dbReference>
<dbReference type="InterPro" id="IPR048469">
    <property type="entry name" value="YchJ-like_M"/>
</dbReference>
<dbReference type="NCBIfam" id="NF002449">
    <property type="entry name" value="PRK01617.1"/>
    <property type="match status" value="1"/>
</dbReference>
<dbReference type="NCBIfam" id="NF002592">
    <property type="entry name" value="PRK02250.1"/>
    <property type="match status" value="1"/>
</dbReference>
<dbReference type="PANTHER" id="PTHR33747:SF1">
    <property type="entry name" value="ADENYLATE CYCLASE-ASSOCIATED CAP C-TERMINAL DOMAIN-CONTAINING PROTEIN"/>
    <property type="match status" value="1"/>
</dbReference>
<dbReference type="PANTHER" id="PTHR33747">
    <property type="entry name" value="UPF0225 PROTEIN SCO1677"/>
    <property type="match status" value="1"/>
</dbReference>
<dbReference type="Pfam" id="PF02810">
    <property type="entry name" value="SEC-C"/>
    <property type="match status" value="1"/>
</dbReference>
<dbReference type="Pfam" id="PF17775">
    <property type="entry name" value="YchJ_M-like"/>
    <property type="match status" value="1"/>
</dbReference>
<dbReference type="SUPFAM" id="SSF54427">
    <property type="entry name" value="NTF2-like"/>
    <property type="match status" value="1"/>
</dbReference>
<dbReference type="SUPFAM" id="SSF103642">
    <property type="entry name" value="Sec-C motif"/>
    <property type="match status" value="1"/>
</dbReference>
<gene>
    <name type="ordered locus">VC0395_A1443</name>
    <name type="ordered locus">VC395_1967</name>
</gene>
<organism>
    <name type="scientific">Vibrio cholerae serotype O1 (strain ATCC 39541 / Classical Ogawa 395 / O395)</name>
    <dbReference type="NCBI Taxonomy" id="345073"/>
    <lineage>
        <taxon>Bacteria</taxon>
        <taxon>Pseudomonadati</taxon>
        <taxon>Pseudomonadota</taxon>
        <taxon>Gammaproteobacteria</taxon>
        <taxon>Vibrionales</taxon>
        <taxon>Vibrionaceae</taxon>
        <taxon>Vibrio</taxon>
    </lineage>
</organism>
<name>Y2643_VIBC3</name>
<comment type="similarity">
    <text evidence="1">Belongs to the UPF0225 family.</text>
</comment>
<reference key="1">
    <citation type="submission" date="2007-03" db="EMBL/GenBank/DDBJ databases">
        <authorList>
            <person name="Heidelberg J."/>
        </authorList>
    </citation>
    <scope>NUCLEOTIDE SEQUENCE [LARGE SCALE GENOMIC DNA]</scope>
    <source>
        <strain>ATCC 39541 / Classical Ogawa 395 / O395</strain>
    </source>
</reference>
<reference key="2">
    <citation type="journal article" date="2008" name="PLoS ONE">
        <title>A recalibrated molecular clock and independent origins for the cholera pandemic clones.</title>
        <authorList>
            <person name="Feng L."/>
            <person name="Reeves P.R."/>
            <person name="Lan R."/>
            <person name="Ren Y."/>
            <person name="Gao C."/>
            <person name="Zhou Z."/>
            <person name="Ren Y."/>
            <person name="Cheng J."/>
            <person name="Wang W."/>
            <person name="Wang J."/>
            <person name="Qian W."/>
            <person name="Li D."/>
            <person name="Wang L."/>
        </authorList>
    </citation>
    <scope>NUCLEOTIDE SEQUENCE [LARGE SCALE GENOMIC DNA]</scope>
    <source>
        <strain>ATCC 39541 / Classical Ogawa 395 / O395</strain>
    </source>
</reference>
<feature type="chain" id="PRO_1000072655" description="UPF0225 protein VC0395_A1443/VC395_1967">
    <location>
        <begin position="1"/>
        <end position="151"/>
    </location>
</feature>
<proteinExistence type="inferred from homology"/>
<protein>
    <recommendedName>
        <fullName evidence="1">UPF0225 protein VC0395_A1443/VC395_1967</fullName>
    </recommendedName>
</protein>
<sequence>MSCYCGNTQPYSQCCEPIHLNPHSAQVPEQLMRARFSAHILKNVEFVIETYHPSCQASNERDAISESVHSHWLRLEIISTQMGATPNEGFVHFKAFLDQEGKVFCLEERSRFLKENNCWFYIDGEFPAAIKQGRNDPCACGSGKKYKKCCG</sequence>